<keyword id="KW-0456">Lyase</keyword>
<keyword id="KW-0663">Pyridoxal phosphate</keyword>
<keyword id="KW-0704">Schiff base</keyword>
<evidence type="ECO:0000255" key="1">
    <source>
        <dbReference type="HAMAP-Rule" id="MF_01824"/>
    </source>
</evidence>
<reference key="1">
    <citation type="submission" date="2002-08" db="EMBL/GenBank/DDBJ databases">
        <title>Reiterated domain duplication in clostridial collagenases.</title>
        <authorList>
            <person name="Matsushita O."/>
        </authorList>
    </citation>
    <scope>NUCLEOTIDE SEQUENCE [GENOMIC DNA]</scope>
    <source>
        <strain>ATCC 17861 / JCM 1406 / DSM 14992 / NCTC 13029</strain>
    </source>
</reference>
<dbReference type="EC" id="4.3.3.6" evidence="1"/>
<dbReference type="EMBL" id="AB090332">
    <property type="protein sequence ID" value="BAC57544.1"/>
    <property type="molecule type" value="Genomic_DNA"/>
</dbReference>
<dbReference type="SMR" id="Q84IL8"/>
<dbReference type="UniPathway" id="UPA00245"/>
<dbReference type="GO" id="GO:0036381">
    <property type="term" value="F:pyridoxal 5'-phosphate synthase (glutamine hydrolysing) activity"/>
    <property type="evidence" value="ECO:0007669"/>
    <property type="project" value="UniProtKB-EC"/>
</dbReference>
<dbReference type="GO" id="GO:0006520">
    <property type="term" value="P:amino acid metabolic process"/>
    <property type="evidence" value="ECO:0007669"/>
    <property type="project" value="TreeGrafter"/>
</dbReference>
<dbReference type="GO" id="GO:0042823">
    <property type="term" value="P:pyridoxal phosphate biosynthetic process"/>
    <property type="evidence" value="ECO:0007669"/>
    <property type="project" value="UniProtKB-UniPathway"/>
</dbReference>
<dbReference type="GO" id="GO:0008615">
    <property type="term" value="P:pyridoxine biosynthetic process"/>
    <property type="evidence" value="ECO:0007669"/>
    <property type="project" value="TreeGrafter"/>
</dbReference>
<dbReference type="FunFam" id="3.20.20.70:FF:000001">
    <property type="entry name" value="Pyridoxine biosynthesis protein PDX1"/>
    <property type="match status" value="1"/>
</dbReference>
<dbReference type="Gene3D" id="3.20.20.70">
    <property type="entry name" value="Aldolase class I"/>
    <property type="match status" value="1"/>
</dbReference>
<dbReference type="InterPro" id="IPR013785">
    <property type="entry name" value="Aldolase_TIM"/>
</dbReference>
<dbReference type="InterPro" id="IPR001852">
    <property type="entry name" value="PdxS/SNZ"/>
</dbReference>
<dbReference type="InterPro" id="IPR033755">
    <property type="entry name" value="PdxS/SNZ_N"/>
</dbReference>
<dbReference type="InterPro" id="IPR011060">
    <property type="entry name" value="RibuloseP-bd_barrel"/>
</dbReference>
<dbReference type="NCBIfam" id="NF003215">
    <property type="entry name" value="PRK04180.1"/>
    <property type="match status" value="1"/>
</dbReference>
<dbReference type="PANTHER" id="PTHR31829">
    <property type="entry name" value="PYRIDOXAL 5'-PHOSPHATE SYNTHASE SUBUNIT SNZ1-RELATED"/>
    <property type="match status" value="1"/>
</dbReference>
<dbReference type="PANTHER" id="PTHR31829:SF0">
    <property type="entry name" value="PYRIDOXAL 5'-PHOSPHATE SYNTHASE SUBUNIT SNZ1-RELATED"/>
    <property type="match status" value="1"/>
</dbReference>
<dbReference type="Pfam" id="PF01680">
    <property type="entry name" value="SOR_SNZ"/>
    <property type="match status" value="1"/>
</dbReference>
<dbReference type="SUPFAM" id="SSF51366">
    <property type="entry name" value="Ribulose-phoshate binding barrel"/>
    <property type="match status" value="1"/>
</dbReference>
<dbReference type="PROSITE" id="PS01235">
    <property type="entry name" value="PDXS_SNZ_1"/>
    <property type="match status" value="1"/>
</dbReference>
<dbReference type="PROSITE" id="PS51129">
    <property type="entry name" value="PDXS_SNZ_2"/>
    <property type="match status" value="1"/>
</dbReference>
<comment type="function">
    <text evidence="1">Catalyzes the formation of pyridoxal 5'-phosphate from ribose 5-phosphate (RBP), glyceraldehyde 3-phosphate (G3P) and ammonia. The ammonia is provided by the PdxT subunit. Can also use ribulose 5-phosphate and dihydroxyacetone phosphate as substrates, resulting from enzyme-catalyzed isomerization of RBP and G3P, respectively.</text>
</comment>
<comment type="catalytic activity">
    <reaction evidence="1">
        <text>aldehydo-D-ribose 5-phosphate + D-glyceraldehyde 3-phosphate + L-glutamine = pyridoxal 5'-phosphate + L-glutamate + phosphate + 3 H2O + H(+)</text>
        <dbReference type="Rhea" id="RHEA:31507"/>
        <dbReference type="ChEBI" id="CHEBI:15377"/>
        <dbReference type="ChEBI" id="CHEBI:15378"/>
        <dbReference type="ChEBI" id="CHEBI:29985"/>
        <dbReference type="ChEBI" id="CHEBI:43474"/>
        <dbReference type="ChEBI" id="CHEBI:58273"/>
        <dbReference type="ChEBI" id="CHEBI:58359"/>
        <dbReference type="ChEBI" id="CHEBI:59776"/>
        <dbReference type="ChEBI" id="CHEBI:597326"/>
        <dbReference type="EC" id="4.3.3.6"/>
    </reaction>
</comment>
<comment type="pathway">
    <text evidence="1">Cofactor biosynthesis; pyridoxal 5'-phosphate biosynthesis.</text>
</comment>
<comment type="subunit">
    <text evidence="1">In the presence of PdxT, forms a dodecamer of heterodimers.</text>
</comment>
<comment type="similarity">
    <text evidence="1">Belongs to the PdxS/SNZ family.</text>
</comment>
<accession>Q84IL8</accession>
<organism>
    <name type="scientific">Clostridium novyi</name>
    <dbReference type="NCBI Taxonomy" id="1542"/>
    <lineage>
        <taxon>Bacteria</taxon>
        <taxon>Bacillati</taxon>
        <taxon>Bacillota</taxon>
        <taxon>Clostridia</taxon>
        <taxon>Eubacteriales</taxon>
        <taxon>Clostridiaceae</taxon>
        <taxon>Clostridium</taxon>
    </lineage>
</organism>
<sequence length="232" mass="25193">SRMSDPKMIKEIIDAVSIPVMAKVRIGHVVEAQILQAIGIDYIDESEVLTPADDLFHINKKEFNVPFVCGARNLGEALRRIGEGACMIRTKGEAGTGNVIEAVRHMRTIQSQIRKLKVMPKEELMIAAKELGAPYDLVEYVRENGKLPVINFAAGGIATPADAALMMQLGCDGVFVGSGIFKSENPAKRAKAIVEAVKNYNNPLKIAEVSEGLGEAMTGLEIDKLDVTFAER</sequence>
<proteinExistence type="inferred from homology"/>
<name>PDXS_CLONO</name>
<protein>
    <recommendedName>
        <fullName evidence="1">Pyridoxal 5'-phosphate synthase subunit PdxS</fullName>
        <shortName evidence="1">PLP synthase subunit PdxS</shortName>
        <ecNumber evidence="1">4.3.3.6</ecNumber>
    </recommendedName>
    <alternativeName>
        <fullName evidence="1">Pdx1</fullName>
    </alternativeName>
</protein>
<feature type="chain" id="PRO_0000109386" description="Pyridoxal 5'-phosphate synthase subunit PdxS">
    <location>
        <begin position="1" status="less than"/>
        <end position="232"/>
    </location>
</feature>
<feature type="active site" description="Schiff-base intermediate with D-ribose 5-phosphate" evidence="1">
    <location>
        <position position="23"/>
    </location>
</feature>
<feature type="binding site" evidence="1">
    <location>
        <position position="95"/>
    </location>
    <ligand>
        <name>D-ribose 5-phosphate</name>
        <dbReference type="ChEBI" id="CHEBI:78346"/>
    </ligand>
</feature>
<feature type="binding site" evidence="1">
    <location>
        <position position="107"/>
    </location>
    <ligand>
        <name>D-glyceraldehyde 3-phosphate</name>
        <dbReference type="ChEBI" id="CHEBI:59776"/>
    </ligand>
</feature>
<feature type="binding site" evidence="1">
    <location>
        <position position="156"/>
    </location>
    <ligand>
        <name>D-ribose 5-phosphate</name>
        <dbReference type="ChEBI" id="CHEBI:78346"/>
    </ligand>
</feature>
<feature type="binding site" evidence="1">
    <location>
        <begin position="177"/>
        <end position="178"/>
    </location>
    <ligand>
        <name>D-ribose 5-phosphate</name>
        <dbReference type="ChEBI" id="CHEBI:78346"/>
    </ligand>
</feature>
<feature type="non-terminal residue">
    <location>
        <position position="1"/>
    </location>
</feature>
<gene>
    <name evidence="1" type="primary">pdxS</name>
</gene>